<sequence length="282" mass="30351">MDILDKLRGGVIMDVTNPEQAKIAENAGAVAVMALERIPADIRAAGGVSRMSDPKMIKEIIKAVKIPVMAKVRIGHFVEASILEAIGIDFIDESEVLSPADEVYHVDKNKFKVPFVCGARNLGEALRRIQEGAKMIRTKGEAGTGDVIQAVKHMRQIQSEMRQLTCLREDELYVAAKNFQVPYALVEYVHKHGKLPVPNFSAGGVATPADAALMVHLGADGVFVGSGIFKSGDPAKRAAAIVKAVKNYDNPAILAEVSENLGPAMVGINEEEIKVIMSERGV</sequence>
<accession>Q73QI7</accession>
<comment type="function">
    <text evidence="1">Catalyzes the formation of pyridoxal 5'-phosphate from ribose 5-phosphate (RBP), glyceraldehyde 3-phosphate (G3P) and ammonia. The ammonia is provided by the PdxT subunit. Can also use ribulose 5-phosphate and dihydroxyacetone phosphate as substrates, resulting from enzyme-catalyzed isomerization of RBP and G3P, respectively.</text>
</comment>
<comment type="catalytic activity">
    <reaction evidence="1">
        <text>aldehydo-D-ribose 5-phosphate + D-glyceraldehyde 3-phosphate + L-glutamine = pyridoxal 5'-phosphate + L-glutamate + phosphate + 3 H2O + H(+)</text>
        <dbReference type="Rhea" id="RHEA:31507"/>
        <dbReference type="ChEBI" id="CHEBI:15377"/>
        <dbReference type="ChEBI" id="CHEBI:15378"/>
        <dbReference type="ChEBI" id="CHEBI:29985"/>
        <dbReference type="ChEBI" id="CHEBI:43474"/>
        <dbReference type="ChEBI" id="CHEBI:58273"/>
        <dbReference type="ChEBI" id="CHEBI:58359"/>
        <dbReference type="ChEBI" id="CHEBI:59776"/>
        <dbReference type="ChEBI" id="CHEBI:597326"/>
        <dbReference type="EC" id="4.3.3.6"/>
    </reaction>
</comment>
<comment type="pathway">
    <text evidence="1">Cofactor biosynthesis; pyridoxal 5'-phosphate biosynthesis.</text>
</comment>
<comment type="subunit">
    <text evidence="1">In the presence of PdxT, forms a dodecamer of heterodimers.</text>
</comment>
<comment type="similarity">
    <text evidence="1">Belongs to the PdxS/SNZ family.</text>
</comment>
<keyword id="KW-0456">Lyase</keyword>
<keyword id="KW-0663">Pyridoxal phosphate</keyword>
<keyword id="KW-1185">Reference proteome</keyword>
<keyword id="KW-0704">Schiff base</keyword>
<feature type="chain" id="PRO_0000109427" description="Pyridoxal 5'-phosphate synthase subunit PdxS">
    <location>
        <begin position="1"/>
        <end position="282"/>
    </location>
</feature>
<feature type="active site" description="Schiff-base intermediate with D-ribose 5-phosphate" evidence="1">
    <location>
        <position position="71"/>
    </location>
</feature>
<feature type="binding site" evidence="1">
    <location>
        <position position="14"/>
    </location>
    <ligand>
        <name>D-ribose 5-phosphate</name>
        <dbReference type="ChEBI" id="CHEBI:78346"/>
    </ligand>
</feature>
<feature type="binding site" evidence="1">
    <location>
        <position position="143"/>
    </location>
    <ligand>
        <name>D-ribose 5-phosphate</name>
        <dbReference type="ChEBI" id="CHEBI:78346"/>
    </ligand>
</feature>
<feature type="binding site" evidence="1">
    <location>
        <position position="155"/>
    </location>
    <ligand>
        <name>D-glyceraldehyde 3-phosphate</name>
        <dbReference type="ChEBI" id="CHEBI:59776"/>
    </ligand>
</feature>
<feature type="binding site" evidence="1">
    <location>
        <position position="204"/>
    </location>
    <ligand>
        <name>D-ribose 5-phosphate</name>
        <dbReference type="ChEBI" id="CHEBI:78346"/>
    </ligand>
</feature>
<feature type="binding site" evidence="1">
    <location>
        <begin position="225"/>
        <end position="226"/>
    </location>
    <ligand>
        <name>D-ribose 5-phosphate</name>
        <dbReference type="ChEBI" id="CHEBI:78346"/>
    </ligand>
</feature>
<organism>
    <name type="scientific">Treponema denticola (strain ATCC 35405 / DSM 14222 / CIP 103919 / JCM 8153 / KCTC 15104)</name>
    <dbReference type="NCBI Taxonomy" id="243275"/>
    <lineage>
        <taxon>Bacteria</taxon>
        <taxon>Pseudomonadati</taxon>
        <taxon>Spirochaetota</taxon>
        <taxon>Spirochaetia</taxon>
        <taxon>Spirochaetales</taxon>
        <taxon>Treponemataceae</taxon>
        <taxon>Treponema</taxon>
    </lineage>
</organism>
<dbReference type="EC" id="4.3.3.6" evidence="1"/>
<dbReference type="EMBL" id="AE017226">
    <property type="protein sequence ID" value="AAS10951.1"/>
    <property type="molecule type" value="Genomic_DNA"/>
</dbReference>
<dbReference type="RefSeq" id="NP_971070.1">
    <property type="nucleotide sequence ID" value="NC_002967.9"/>
</dbReference>
<dbReference type="RefSeq" id="WP_002666038.1">
    <property type="nucleotide sequence ID" value="NC_002967.9"/>
</dbReference>
<dbReference type="SMR" id="Q73QI7"/>
<dbReference type="STRING" id="243275.TDE_0456"/>
<dbReference type="PaxDb" id="243275-TDE_0456"/>
<dbReference type="GeneID" id="2740753"/>
<dbReference type="KEGG" id="tde:TDE_0456"/>
<dbReference type="PATRIC" id="fig|243275.7.peg.443"/>
<dbReference type="eggNOG" id="COG0214">
    <property type="taxonomic scope" value="Bacteria"/>
</dbReference>
<dbReference type="HOGENOM" id="CLU_055352_1_0_12"/>
<dbReference type="OrthoDB" id="9772545at2"/>
<dbReference type="UniPathway" id="UPA00245"/>
<dbReference type="Proteomes" id="UP000008212">
    <property type="component" value="Chromosome"/>
</dbReference>
<dbReference type="GO" id="GO:0036381">
    <property type="term" value="F:pyridoxal 5'-phosphate synthase (glutamine hydrolysing) activity"/>
    <property type="evidence" value="ECO:0007669"/>
    <property type="project" value="UniProtKB-UniRule"/>
</dbReference>
<dbReference type="GO" id="GO:0006520">
    <property type="term" value="P:amino acid metabolic process"/>
    <property type="evidence" value="ECO:0007669"/>
    <property type="project" value="TreeGrafter"/>
</dbReference>
<dbReference type="GO" id="GO:0042823">
    <property type="term" value="P:pyridoxal phosphate biosynthetic process"/>
    <property type="evidence" value="ECO:0007669"/>
    <property type="project" value="UniProtKB-UniRule"/>
</dbReference>
<dbReference type="GO" id="GO:0008615">
    <property type="term" value="P:pyridoxine biosynthetic process"/>
    <property type="evidence" value="ECO:0007669"/>
    <property type="project" value="TreeGrafter"/>
</dbReference>
<dbReference type="CDD" id="cd04727">
    <property type="entry name" value="pdxS"/>
    <property type="match status" value="1"/>
</dbReference>
<dbReference type="FunFam" id="3.20.20.70:FF:000001">
    <property type="entry name" value="Pyridoxine biosynthesis protein PDX1"/>
    <property type="match status" value="1"/>
</dbReference>
<dbReference type="Gene3D" id="3.20.20.70">
    <property type="entry name" value="Aldolase class I"/>
    <property type="match status" value="1"/>
</dbReference>
<dbReference type="HAMAP" id="MF_01824">
    <property type="entry name" value="PdxS"/>
    <property type="match status" value="1"/>
</dbReference>
<dbReference type="InterPro" id="IPR013785">
    <property type="entry name" value="Aldolase_TIM"/>
</dbReference>
<dbReference type="InterPro" id="IPR001852">
    <property type="entry name" value="PdxS/SNZ"/>
</dbReference>
<dbReference type="InterPro" id="IPR033755">
    <property type="entry name" value="PdxS/SNZ_N"/>
</dbReference>
<dbReference type="InterPro" id="IPR011060">
    <property type="entry name" value="RibuloseP-bd_barrel"/>
</dbReference>
<dbReference type="NCBIfam" id="NF003215">
    <property type="entry name" value="PRK04180.1"/>
    <property type="match status" value="1"/>
</dbReference>
<dbReference type="NCBIfam" id="TIGR00343">
    <property type="entry name" value="pyridoxal 5'-phosphate synthase lyase subunit PdxS"/>
    <property type="match status" value="1"/>
</dbReference>
<dbReference type="PANTHER" id="PTHR31829">
    <property type="entry name" value="PYRIDOXAL 5'-PHOSPHATE SYNTHASE SUBUNIT SNZ1-RELATED"/>
    <property type="match status" value="1"/>
</dbReference>
<dbReference type="PANTHER" id="PTHR31829:SF0">
    <property type="entry name" value="PYRIDOXAL 5'-PHOSPHATE SYNTHASE SUBUNIT SNZ1-RELATED"/>
    <property type="match status" value="1"/>
</dbReference>
<dbReference type="Pfam" id="PF01680">
    <property type="entry name" value="SOR_SNZ"/>
    <property type="match status" value="1"/>
</dbReference>
<dbReference type="PIRSF" id="PIRSF029271">
    <property type="entry name" value="Pdx1"/>
    <property type="match status" value="1"/>
</dbReference>
<dbReference type="SUPFAM" id="SSF51366">
    <property type="entry name" value="Ribulose-phoshate binding barrel"/>
    <property type="match status" value="1"/>
</dbReference>
<dbReference type="PROSITE" id="PS01235">
    <property type="entry name" value="PDXS_SNZ_1"/>
    <property type="match status" value="1"/>
</dbReference>
<dbReference type="PROSITE" id="PS51129">
    <property type="entry name" value="PDXS_SNZ_2"/>
    <property type="match status" value="1"/>
</dbReference>
<reference key="1">
    <citation type="journal article" date="2004" name="Proc. Natl. Acad. Sci. U.S.A.">
        <title>Comparison of the genome of the oral pathogen Treponema denticola with other spirochete genomes.</title>
        <authorList>
            <person name="Seshadri R."/>
            <person name="Myers G.S.A."/>
            <person name="Tettelin H."/>
            <person name="Eisen J.A."/>
            <person name="Heidelberg J.F."/>
            <person name="Dodson R.J."/>
            <person name="Davidsen T.M."/>
            <person name="DeBoy R.T."/>
            <person name="Fouts D.E."/>
            <person name="Haft D.H."/>
            <person name="Selengut J."/>
            <person name="Ren Q."/>
            <person name="Brinkac L.M."/>
            <person name="Madupu R."/>
            <person name="Kolonay J.F."/>
            <person name="Durkin S.A."/>
            <person name="Daugherty S.C."/>
            <person name="Shetty J."/>
            <person name="Shvartsbeyn A."/>
            <person name="Gebregeorgis E."/>
            <person name="Geer K."/>
            <person name="Tsegaye G."/>
            <person name="Malek J.A."/>
            <person name="Ayodeji B."/>
            <person name="Shatsman S."/>
            <person name="McLeod M.P."/>
            <person name="Smajs D."/>
            <person name="Howell J.K."/>
            <person name="Pal S."/>
            <person name="Amin A."/>
            <person name="Vashisth P."/>
            <person name="McNeill T.Z."/>
            <person name="Xiang Q."/>
            <person name="Sodergren E."/>
            <person name="Baca E."/>
            <person name="Weinstock G.M."/>
            <person name="Norris S.J."/>
            <person name="Fraser C.M."/>
            <person name="Paulsen I.T."/>
        </authorList>
    </citation>
    <scope>NUCLEOTIDE SEQUENCE [LARGE SCALE GENOMIC DNA]</scope>
    <source>
        <strain>ATCC 35405 / DSM 14222 / CIP 103919 / JCM 8153 / KCTC 15104</strain>
    </source>
</reference>
<name>PDXS_TREDE</name>
<gene>
    <name evidence="1" type="primary">pdxS</name>
    <name type="ordered locus">TDE_0456</name>
</gene>
<proteinExistence type="inferred from homology"/>
<evidence type="ECO:0000255" key="1">
    <source>
        <dbReference type="HAMAP-Rule" id="MF_01824"/>
    </source>
</evidence>
<protein>
    <recommendedName>
        <fullName evidence="1">Pyridoxal 5'-phosphate synthase subunit PdxS</fullName>
        <shortName evidence="1">PLP synthase subunit PdxS</shortName>
        <ecNumber evidence="1">4.3.3.6</ecNumber>
    </recommendedName>
    <alternativeName>
        <fullName evidence="1">Pdx1</fullName>
    </alternativeName>
</protein>